<feature type="chain" id="PRO_0000410839" description="Octanoyl-[GcvH]:protein N-octanoyltransferase">
    <location>
        <begin position="1"/>
        <end position="273"/>
    </location>
</feature>
<feature type="domain" description="BPL/LPL catalytic" evidence="2">
    <location>
        <begin position="40"/>
        <end position="245"/>
    </location>
</feature>
<feature type="active site" description="Acyl-thioester intermediate" evidence="1">
    <location>
        <position position="144"/>
    </location>
</feature>
<feature type="site" description="Lowers pKa of active site Cys" evidence="1">
    <location>
        <position position="156"/>
    </location>
</feature>
<dbReference type="EC" id="2.3.1.204" evidence="1"/>
<dbReference type="EMBL" id="CP001022">
    <property type="protein sequence ID" value="ACB59724.1"/>
    <property type="molecule type" value="Genomic_DNA"/>
</dbReference>
<dbReference type="RefSeq" id="WP_012369149.1">
    <property type="nucleotide sequence ID" value="NC_010556.1"/>
</dbReference>
<dbReference type="SMR" id="B1YHU0"/>
<dbReference type="STRING" id="262543.Exig_0238"/>
<dbReference type="KEGG" id="esi:Exig_0238"/>
<dbReference type="eggNOG" id="COG0095">
    <property type="taxonomic scope" value="Bacteria"/>
</dbReference>
<dbReference type="HOGENOM" id="CLU_067270_0_0_9"/>
<dbReference type="OrthoDB" id="2080934at2"/>
<dbReference type="Proteomes" id="UP000001681">
    <property type="component" value="Chromosome"/>
</dbReference>
<dbReference type="GO" id="GO:0033819">
    <property type="term" value="F:lipoyl(octanoyl) transferase activity"/>
    <property type="evidence" value="ECO:0007669"/>
    <property type="project" value="InterPro"/>
</dbReference>
<dbReference type="GO" id="GO:0009107">
    <property type="term" value="P:lipoate biosynthetic process"/>
    <property type="evidence" value="ECO:0007669"/>
    <property type="project" value="UniProtKB-UniRule"/>
</dbReference>
<dbReference type="GO" id="GO:0036211">
    <property type="term" value="P:protein modification process"/>
    <property type="evidence" value="ECO:0007669"/>
    <property type="project" value="InterPro"/>
</dbReference>
<dbReference type="CDD" id="cd16443">
    <property type="entry name" value="LplA"/>
    <property type="match status" value="1"/>
</dbReference>
<dbReference type="Gene3D" id="3.30.930.10">
    <property type="entry name" value="Bira Bifunctional Protein, Domain 2"/>
    <property type="match status" value="1"/>
</dbReference>
<dbReference type="HAMAP" id="MF_02119">
    <property type="entry name" value="LipL"/>
    <property type="match status" value="1"/>
</dbReference>
<dbReference type="InterPro" id="IPR045864">
    <property type="entry name" value="aa-tRNA-synth_II/BPL/LPL"/>
</dbReference>
<dbReference type="InterPro" id="IPR004143">
    <property type="entry name" value="BPL_LPL_catalytic"/>
</dbReference>
<dbReference type="InterPro" id="IPR024897">
    <property type="entry name" value="LipL"/>
</dbReference>
<dbReference type="InterPro" id="IPR050664">
    <property type="entry name" value="Octanoyltrans_LipM/LipL"/>
</dbReference>
<dbReference type="PANTHER" id="PTHR43679:SF2">
    <property type="entry name" value="OCTANOYL-[GCVH]:PROTEIN N-OCTANOYLTRANSFERASE"/>
    <property type="match status" value="1"/>
</dbReference>
<dbReference type="PANTHER" id="PTHR43679">
    <property type="entry name" value="OCTANOYLTRANSFERASE LIPM-RELATED"/>
    <property type="match status" value="1"/>
</dbReference>
<dbReference type="Pfam" id="PF21948">
    <property type="entry name" value="LplA-B_cat"/>
    <property type="match status" value="1"/>
</dbReference>
<dbReference type="SUPFAM" id="SSF55681">
    <property type="entry name" value="Class II aaRS and biotin synthetases"/>
    <property type="match status" value="1"/>
</dbReference>
<dbReference type="PROSITE" id="PS51733">
    <property type="entry name" value="BPL_LPL_CATALYTIC"/>
    <property type="match status" value="1"/>
</dbReference>
<reference key="1">
    <citation type="submission" date="2008-04" db="EMBL/GenBank/DDBJ databases">
        <title>Complete sequence of chromosome of Exiguobacterium sibiricum 255-15.</title>
        <authorList>
            <consortium name="US DOE Joint Genome Institute"/>
            <person name="Copeland A."/>
            <person name="Lucas S."/>
            <person name="Lapidus A."/>
            <person name="Glavina del Rio T."/>
            <person name="Dalin E."/>
            <person name="Tice H."/>
            <person name="Bruce D."/>
            <person name="Goodwin L."/>
            <person name="Pitluck S."/>
            <person name="Kiss H."/>
            <person name="Chertkov O."/>
            <person name="Monk C."/>
            <person name="Brettin T."/>
            <person name="Detter J.C."/>
            <person name="Han C."/>
            <person name="Kuske C.R."/>
            <person name="Schmutz J."/>
            <person name="Larimer F."/>
            <person name="Land M."/>
            <person name="Hauser L."/>
            <person name="Kyrpides N."/>
            <person name="Mikhailova N."/>
            <person name="Vishnivetskaya T."/>
            <person name="Rodrigues D.F."/>
            <person name="Gilichinsky D."/>
            <person name="Tiedje J."/>
            <person name="Richardson P."/>
        </authorList>
    </citation>
    <scope>NUCLEOTIDE SEQUENCE [LARGE SCALE GENOMIC DNA]</scope>
    <source>
        <strain>DSM 17290 / CCUG 55495 / CIP 109462 / JCM 13490 / 255-15</strain>
    </source>
</reference>
<name>LIPL_EXIS2</name>
<keyword id="KW-0012">Acyltransferase</keyword>
<keyword id="KW-1185">Reference proteome</keyword>
<keyword id="KW-0808">Transferase</keyword>
<proteinExistence type="inferred from homology"/>
<protein>
    <recommendedName>
        <fullName evidence="1">Octanoyl-[GcvH]:protein N-octanoyltransferase</fullName>
        <ecNumber evidence="1">2.3.1.204</ecNumber>
    </recommendedName>
    <alternativeName>
        <fullName evidence="1">Octanoyl-[GcvH]:E2 amidotransferase</fullName>
    </alternativeName>
</protein>
<sequence>MGIELLKQEHYRIFDQTSLGNTFHATQSFAMDDTLCASVATEGAAIRSWVHHETVVLGIQDARLPHLDDGIDVLHAHGFQPVIRNSGGLAVVLDAGVLNISLVLPERGGIDIDSGYEAMLALVRRMFAEETDAINAGEVVGSYCPGSYDLSIAGKKFAGISQRRVRGGVAVQIYLCVNGSGSARAQLVRDFYAAALQGETTKFVYPTVVPETMASLEELLQRPLTVEDCLVRVYRSLMELGATLTPSVLSEVENERFGVNLGRMLDRNEKVLG</sequence>
<organism>
    <name type="scientific">Exiguobacterium sibiricum (strain DSM 17290 / CCUG 55495 / CIP 109462 / JCM 13490 / 255-15)</name>
    <dbReference type="NCBI Taxonomy" id="262543"/>
    <lineage>
        <taxon>Bacteria</taxon>
        <taxon>Bacillati</taxon>
        <taxon>Bacillota</taxon>
        <taxon>Bacilli</taxon>
        <taxon>Bacillales</taxon>
        <taxon>Bacillales Family XII. Incertae Sedis</taxon>
        <taxon>Exiguobacterium</taxon>
    </lineage>
</organism>
<evidence type="ECO:0000255" key="1">
    <source>
        <dbReference type="HAMAP-Rule" id="MF_02119"/>
    </source>
</evidence>
<evidence type="ECO:0000255" key="2">
    <source>
        <dbReference type="PROSITE-ProRule" id="PRU01067"/>
    </source>
</evidence>
<accession>B1YHU0</accession>
<comment type="function">
    <text evidence="1">Catalyzes the amidotransfer (transamidation) of the octanoyl moiety from octanoyl-GcvH to the lipoyl domain of the E2 subunit of lipoate-dependent enzymes.</text>
</comment>
<comment type="catalytic activity">
    <reaction evidence="1">
        <text>N(6)-octanoyl-L-lysyl-[glycine-cleavage complex H protein] + L-lysyl-[lipoyl-carrier protein] = N(6)-octanoyl-L-lysyl-[lipoyl-carrier protein] + L-lysyl-[glycine-cleavage complex H protein]</text>
        <dbReference type="Rhea" id="RHEA:20213"/>
        <dbReference type="Rhea" id="RHEA-COMP:10500"/>
        <dbReference type="Rhea" id="RHEA-COMP:10501"/>
        <dbReference type="Rhea" id="RHEA-COMP:10503"/>
        <dbReference type="Rhea" id="RHEA-COMP:10504"/>
        <dbReference type="ChEBI" id="CHEBI:29969"/>
        <dbReference type="ChEBI" id="CHEBI:78809"/>
        <dbReference type="EC" id="2.3.1.204"/>
    </reaction>
</comment>
<comment type="pathway">
    <text evidence="1">Protein modification; protein lipoylation via endogenous pathway; protein N(6)-(lipoyl)lysine from octanoyl-[acyl-carrier-protein].</text>
</comment>
<comment type="miscellaneous">
    <text evidence="1">The reaction proceeds via a thioester-linked acyl-enzyme intermediate.</text>
</comment>
<comment type="similarity">
    <text evidence="1">Belongs to the octanoyltransferase LipL family.</text>
</comment>
<gene>
    <name evidence="1" type="primary">lipL</name>
    <name type="ordered locus">Exig_0238</name>
</gene>